<proteinExistence type="inferred from homology"/>
<accession>Q9CLJ5</accession>
<organism>
    <name type="scientific">Pasteurella multocida (strain Pm70)</name>
    <dbReference type="NCBI Taxonomy" id="272843"/>
    <lineage>
        <taxon>Bacteria</taxon>
        <taxon>Pseudomonadati</taxon>
        <taxon>Pseudomonadota</taxon>
        <taxon>Gammaproteobacteria</taxon>
        <taxon>Pasteurellales</taxon>
        <taxon>Pasteurellaceae</taxon>
        <taxon>Pasteurella</taxon>
    </lineage>
</organism>
<evidence type="ECO:0000255" key="1">
    <source>
        <dbReference type="HAMAP-Rule" id="MF_01615"/>
    </source>
</evidence>
<gene>
    <name evidence="1" type="primary">pdxT</name>
    <name type="ordered locus">PM1233</name>
</gene>
<sequence length="193" mass="21094">MKDYSHLHIGVLALQGAVSEHLRQIEQLGANASAIKTVSELTALDGLVLPGGESTTIGRLMRQYGFIEAIQDVAKQGKGIFGTCAGMILLAKQLENDPTVHLGLMDICVQRNAFGRQVDSFQTALEIEGFATTFPAVFIRAPHIAQVNHEKVQCLATFQGHVVLAKQQNLLACAFHPELTTDLRVMQHFLEMC</sequence>
<comment type="function">
    <text evidence="1">Catalyzes the hydrolysis of glutamine to glutamate and ammonia as part of the biosynthesis of pyridoxal 5'-phosphate. The resulting ammonia molecule is channeled to the active site of PdxS.</text>
</comment>
<comment type="catalytic activity">
    <reaction evidence="1">
        <text>aldehydo-D-ribose 5-phosphate + D-glyceraldehyde 3-phosphate + L-glutamine = pyridoxal 5'-phosphate + L-glutamate + phosphate + 3 H2O + H(+)</text>
        <dbReference type="Rhea" id="RHEA:31507"/>
        <dbReference type="ChEBI" id="CHEBI:15377"/>
        <dbReference type="ChEBI" id="CHEBI:15378"/>
        <dbReference type="ChEBI" id="CHEBI:29985"/>
        <dbReference type="ChEBI" id="CHEBI:43474"/>
        <dbReference type="ChEBI" id="CHEBI:58273"/>
        <dbReference type="ChEBI" id="CHEBI:58359"/>
        <dbReference type="ChEBI" id="CHEBI:59776"/>
        <dbReference type="ChEBI" id="CHEBI:597326"/>
        <dbReference type="EC" id="4.3.3.6"/>
    </reaction>
</comment>
<comment type="catalytic activity">
    <reaction evidence="1">
        <text>L-glutamine + H2O = L-glutamate + NH4(+)</text>
        <dbReference type="Rhea" id="RHEA:15889"/>
        <dbReference type="ChEBI" id="CHEBI:15377"/>
        <dbReference type="ChEBI" id="CHEBI:28938"/>
        <dbReference type="ChEBI" id="CHEBI:29985"/>
        <dbReference type="ChEBI" id="CHEBI:58359"/>
        <dbReference type="EC" id="3.5.1.2"/>
    </reaction>
</comment>
<comment type="pathway">
    <text evidence="1">Cofactor biosynthesis; pyridoxal 5'-phosphate biosynthesis.</text>
</comment>
<comment type="subunit">
    <text evidence="1">In the presence of PdxS, forms a dodecamer of heterodimers. Only shows activity in the heterodimer.</text>
</comment>
<comment type="similarity">
    <text evidence="1">Belongs to the glutaminase PdxT/SNO family.</text>
</comment>
<keyword id="KW-0315">Glutamine amidotransferase</keyword>
<keyword id="KW-0378">Hydrolase</keyword>
<keyword id="KW-0456">Lyase</keyword>
<keyword id="KW-0663">Pyridoxal phosphate</keyword>
<keyword id="KW-1185">Reference proteome</keyword>
<reference key="1">
    <citation type="journal article" date="2001" name="Proc. Natl. Acad. Sci. U.S.A.">
        <title>Complete genomic sequence of Pasteurella multocida Pm70.</title>
        <authorList>
            <person name="May B.J."/>
            <person name="Zhang Q."/>
            <person name="Li L.L."/>
            <person name="Paustian M.L."/>
            <person name="Whittam T.S."/>
            <person name="Kapur V."/>
        </authorList>
    </citation>
    <scope>NUCLEOTIDE SEQUENCE [LARGE SCALE GENOMIC DNA]</scope>
    <source>
        <strain>Pm70</strain>
    </source>
</reference>
<dbReference type="EC" id="4.3.3.6" evidence="1"/>
<dbReference type="EC" id="3.5.1.2" evidence="1"/>
<dbReference type="EMBL" id="AE004439">
    <property type="protein sequence ID" value="AAK03317.1"/>
    <property type="molecule type" value="Genomic_DNA"/>
</dbReference>
<dbReference type="RefSeq" id="WP_005717651.1">
    <property type="nucleotide sequence ID" value="NC_002663.1"/>
</dbReference>
<dbReference type="SMR" id="Q9CLJ5"/>
<dbReference type="STRING" id="272843.PM1233"/>
<dbReference type="EnsemblBacteria" id="AAK03317">
    <property type="protein sequence ID" value="AAK03317"/>
    <property type="gene ID" value="PM1233"/>
</dbReference>
<dbReference type="KEGG" id="pmu:PM1233"/>
<dbReference type="PATRIC" id="fig|272843.6.peg.1243"/>
<dbReference type="HOGENOM" id="CLU_069674_2_0_6"/>
<dbReference type="OrthoDB" id="9810320at2"/>
<dbReference type="UniPathway" id="UPA00245"/>
<dbReference type="Proteomes" id="UP000000809">
    <property type="component" value="Chromosome"/>
</dbReference>
<dbReference type="GO" id="GO:0005829">
    <property type="term" value="C:cytosol"/>
    <property type="evidence" value="ECO:0007669"/>
    <property type="project" value="TreeGrafter"/>
</dbReference>
<dbReference type="GO" id="GO:1903600">
    <property type="term" value="C:glutaminase complex"/>
    <property type="evidence" value="ECO:0007669"/>
    <property type="project" value="TreeGrafter"/>
</dbReference>
<dbReference type="GO" id="GO:0004359">
    <property type="term" value="F:glutaminase activity"/>
    <property type="evidence" value="ECO:0007669"/>
    <property type="project" value="UniProtKB-UniRule"/>
</dbReference>
<dbReference type="GO" id="GO:0036381">
    <property type="term" value="F:pyridoxal 5'-phosphate synthase (glutamine hydrolysing) activity"/>
    <property type="evidence" value="ECO:0007669"/>
    <property type="project" value="UniProtKB-UniRule"/>
</dbReference>
<dbReference type="GO" id="GO:0006543">
    <property type="term" value="P:glutamine catabolic process"/>
    <property type="evidence" value="ECO:0007669"/>
    <property type="project" value="UniProtKB-UniRule"/>
</dbReference>
<dbReference type="GO" id="GO:0042823">
    <property type="term" value="P:pyridoxal phosphate biosynthetic process"/>
    <property type="evidence" value="ECO:0007669"/>
    <property type="project" value="UniProtKB-UniRule"/>
</dbReference>
<dbReference type="GO" id="GO:0008614">
    <property type="term" value="P:pyridoxine metabolic process"/>
    <property type="evidence" value="ECO:0007669"/>
    <property type="project" value="TreeGrafter"/>
</dbReference>
<dbReference type="CDD" id="cd01749">
    <property type="entry name" value="GATase1_PB"/>
    <property type="match status" value="1"/>
</dbReference>
<dbReference type="FunFam" id="3.40.50.880:FF:000010">
    <property type="entry name" value="uncharacterized protein LOC100176842 isoform X2"/>
    <property type="match status" value="1"/>
</dbReference>
<dbReference type="Gene3D" id="3.40.50.880">
    <property type="match status" value="1"/>
</dbReference>
<dbReference type="HAMAP" id="MF_01615">
    <property type="entry name" value="PdxT"/>
    <property type="match status" value="1"/>
</dbReference>
<dbReference type="InterPro" id="IPR029062">
    <property type="entry name" value="Class_I_gatase-like"/>
</dbReference>
<dbReference type="InterPro" id="IPR002161">
    <property type="entry name" value="PdxT/SNO"/>
</dbReference>
<dbReference type="InterPro" id="IPR021196">
    <property type="entry name" value="PdxT/SNO_CS"/>
</dbReference>
<dbReference type="NCBIfam" id="TIGR03800">
    <property type="entry name" value="PLP_synth_Pdx2"/>
    <property type="match status" value="1"/>
</dbReference>
<dbReference type="PANTHER" id="PTHR31559">
    <property type="entry name" value="PYRIDOXAL 5'-PHOSPHATE SYNTHASE SUBUNIT SNO"/>
    <property type="match status" value="1"/>
</dbReference>
<dbReference type="PANTHER" id="PTHR31559:SF0">
    <property type="entry name" value="PYRIDOXAL 5'-PHOSPHATE SYNTHASE SUBUNIT SNO1-RELATED"/>
    <property type="match status" value="1"/>
</dbReference>
<dbReference type="Pfam" id="PF01174">
    <property type="entry name" value="SNO"/>
    <property type="match status" value="1"/>
</dbReference>
<dbReference type="PIRSF" id="PIRSF005639">
    <property type="entry name" value="Glut_amidoT_SNO"/>
    <property type="match status" value="1"/>
</dbReference>
<dbReference type="SUPFAM" id="SSF52317">
    <property type="entry name" value="Class I glutamine amidotransferase-like"/>
    <property type="match status" value="1"/>
</dbReference>
<dbReference type="PROSITE" id="PS01236">
    <property type="entry name" value="PDXT_SNO_1"/>
    <property type="match status" value="1"/>
</dbReference>
<dbReference type="PROSITE" id="PS51130">
    <property type="entry name" value="PDXT_SNO_2"/>
    <property type="match status" value="1"/>
</dbReference>
<feature type="chain" id="PRO_0000135653" description="Pyridoxal 5'-phosphate synthase subunit PdxT">
    <location>
        <begin position="1"/>
        <end position="193"/>
    </location>
</feature>
<feature type="active site" description="Nucleophile" evidence="1">
    <location>
        <position position="84"/>
    </location>
</feature>
<feature type="active site" description="Charge relay system" evidence="1">
    <location>
        <position position="176"/>
    </location>
</feature>
<feature type="active site" description="Charge relay system" evidence="1">
    <location>
        <position position="178"/>
    </location>
</feature>
<feature type="binding site" evidence="1">
    <location>
        <begin position="52"/>
        <end position="54"/>
    </location>
    <ligand>
        <name>L-glutamine</name>
        <dbReference type="ChEBI" id="CHEBI:58359"/>
    </ligand>
</feature>
<feature type="binding site" evidence="1">
    <location>
        <position position="111"/>
    </location>
    <ligand>
        <name>L-glutamine</name>
        <dbReference type="ChEBI" id="CHEBI:58359"/>
    </ligand>
</feature>
<feature type="binding site" evidence="1">
    <location>
        <begin position="139"/>
        <end position="140"/>
    </location>
    <ligand>
        <name>L-glutamine</name>
        <dbReference type="ChEBI" id="CHEBI:58359"/>
    </ligand>
</feature>
<protein>
    <recommendedName>
        <fullName evidence="1">Pyridoxal 5'-phosphate synthase subunit PdxT</fullName>
        <ecNumber evidence="1">4.3.3.6</ecNumber>
    </recommendedName>
    <alternativeName>
        <fullName evidence="1">Pdx2</fullName>
    </alternativeName>
    <alternativeName>
        <fullName evidence="1">Pyridoxal 5'-phosphate synthase glutaminase subunit</fullName>
        <ecNumber evidence="1">3.5.1.2</ecNumber>
    </alternativeName>
</protein>
<name>PDXT_PASMU</name>